<protein>
    <recommendedName>
        <fullName>Probable S-adenosylmethionine-dependent methyltransferase Rv3030</fullName>
        <ecNumber>2.1.1.-</ecNumber>
    </recommendedName>
</protein>
<organism>
    <name type="scientific">Mycobacterium tuberculosis (strain ATCC 25618 / H37Rv)</name>
    <dbReference type="NCBI Taxonomy" id="83332"/>
    <lineage>
        <taxon>Bacteria</taxon>
        <taxon>Bacillati</taxon>
        <taxon>Actinomycetota</taxon>
        <taxon>Actinomycetes</taxon>
        <taxon>Mycobacteriales</taxon>
        <taxon>Mycobacteriaceae</taxon>
        <taxon>Mycobacterium</taxon>
        <taxon>Mycobacterium tuberculosis complex</taxon>
    </lineage>
</organism>
<evidence type="ECO:0000250" key="1"/>
<evidence type="ECO:0000256" key="2">
    <source>
        <dbReference type="SAM" id="MobiDB-lite"/>
    </source>
</evidence>
<evidence type="ECO:0000305" key="3"/>
<feature type="chain" id="PRO_0000413014" description="Probable S-adenosylmethionine-dependent methyltransferase Rv3030">
    <location>
        <begin position="1"/>
        <end position="274"/>
    </location>
</feature>
<feature type="region of interest" description="Disordered" evidence="2">
    <location>
        <begin position="1"/>
        <end position="24"/>
    </location>
</feature>
<proteinExistence type="evidence at protein level"/>
<dbReference type="EC" id="2.1.1.-"/>
<dbReference type="EMBL" id="AL123456">
    <property type="protein sequence ID" value="CCP45838.1"/>
    <property type="molecule type" value="Genomic_DNA"/>
</dbReference>
<dbReference type="PIR" id="A70859">
    <property type="entry name" value="A70859"/>
</dbReference>
<dbReference type="RefSeq" id="NP_217546.1">
    <property type="nucleotide sequence ID" value="NC_000962.3"/>
</dbReference>
<dbReference type="RefSeq" id="WP_003415922.1">
    <property type="nucleotide sequence ID" value="NZ_NVQJ01000011.1"/>
</dbReference>
<dbReference type="SMR" id="P9WJZ1"/>
<dbReference type="FunCoup" id="P9WJZ1">
    <property type="interactions" value="1"/>
</dbReference>
<dbReference type="STRING" id="83332.Rv3030"/>
<dbReference type="PaxDb" id="83332-Rv3030"/>
<dbReference type="DNASU" id="888604"/>
<dbReference type="GeneID" id="888604"/>
<dbReference type="KEGG" id="mtu:Rv3030"/>
<dbReference type="KEGG" id="mtv:RVBD_3030"/>
<dbReference type="TubercuList" id="Rv3030"/>
<dbReference type="eggNOG" id="COG2227">
    <property type="taxonomic scope" value="Bacteria"/>
</dbReference>
<dbReference type="InParanoid" id="P9WJZ1"/>
<dbReference type="OrthoDB" id="9810247at2"/>
<dbReference type="PhylomeDB" id="P9WJZ1"/>
<dbReference type="Proteomes" id="UP000001584">
    <property type="component" value="Chromosome"/>
</dbReference>
<dbReference type="GO" id="GO:0005829">
    <property type="term" value="C:cytosol"/>
    <property type="evidence" value="ECO:0007005"/>
    <property type="project" value="MTBBASE"/>
</dbReference>
<dbReference type="GO" id="GO:0005886">
    <property type="term" value="C:plasma membrane"/>
    <property type="evidence" value="ECO:0007005"/>
    <property type="project" value="MTBBASE"/>
</dbReference>
<dbReference type="GO" id="GO:0008168">
    <property type="term" value="F:methyltransferase activity"/>
    <property type="evidence" value="ECO:0000318"/>
    <property type="project" value="GO_Central"/>
</dbReference>
<dbReference type="GO" id="GO:0008757">
    <property type="term" value="F:S-adenosylmethionine-dependent methyltransferase activity"/>
    <property type="evidence" value="ECO:0007669"/>
    <property type="project" value="InterPro"/>
</dbReference>
<dbReference type="GO" id="GO:0032259">
    <property type="term" value="P:methylation"/>
    <property type="evidence" value="ECO:0007669"/>
    <property type="project" value="UniProtKB-KW"/>
</dbReference>
<dbReference type="CDD" id="cd02440">
    <property type="entry name" value="AdoMet_MTases"/>
    <property type="match status" value="1"/>
</dbReference>
<dbReference type="FunFam" id="3.40.50.150:FF:000513">
    <property type="entry name" value="S-adenosylmethionine-dependent methyltransferase"/>
    <property type="match status" value="1"/>
</dbReference>
<dbReference type="Gene3D" id="3.40.50.150">
    <property type="entry name" value="Vaccinia Virus protein VP39"/>
    <property type="match status" value="1"/>
</dbReference>
<dbReference type="InterPro" id="IPR013216">
    <property type="entry name" value="Methyltransf_11"/>
</dbReference>
<dbReference type="InterPro" id="IPR050508">
    <property type="entry name" value="Methyltransf_Superfamily"/>
</dbReference>
<dbReference type="InterPro" id="IPR029063">
    <property type="entry name" value="SAM-dependent_MTases_sf"/>
</dbReference>
<dbReference type="PANTHER" id="PTHR42912">
    <property type="entry name" value="METHYLTRANSFERASE"/>
    <property type="match status" value="1"/>
</dbReference>
<dbReference type="Pfam" id="PF08241">
    <property type="entry name" value="Methyltransf_11"/>
    <property type="match status" value="1"/>
</dbReference>
<dbReference type="SUPFAM" id="SSF53335">
    <property type="entry name" value="S-adenosyl-L-methionine-dependent methyltransferases"/>
    <property type="match status" value="1"/>
</dbReference>
<name>Y3030_MYCTU</name>
<gene>
    <name type="ordered locus">Rv3030</name>
</gene>
<comment type="function">
    <text evidence="1">Probable S-adenosylmethionine-dependent methyltransferase required for the 6-O-methylation of the polysaccharide backbone of 6-O-methylglucosyl lipopolysaccharides (MGLP).</text>
</comment>
<comment type="similarity">
    <text evidence="3">Belongs to the methyltransferase superfamily.</text>
</comment>
<sequence>MCAFVPHVPRHSRGDNPPSASTASPAVLTLTGERTIPDLDIENYWFRRHQVVYQRLAPRCTARDVLEAGCGEGYGADLIACVARQVIAVDYDETAVAHVRSRYPRVEVMQANLAELPLPDASVDVVVNFQVIEHLWDQARFVRECARVLRGSGLLMVSTPNRITFSPGRDTPINPFHTRELNADELTSLLIDAGFVDVAMCGLFHGPRLRDMDARHGGSIIDAQIMRAVAGAPWPPELAADVAAVTTADFEMVAAGHDRDIDDSLDLIAIAVRP</sequence>
<accession>P9WJZ1</accession>
<accession>L0TE97</accession>
<accession>O53277</accession>
<accession>Q7D695</accession>
<keyword id="KW-0489">Methyltransferase</keyword>
<keyword id="KW-1185">Reference proteome</keyword>
<keyword id="KW-0949">S-adenosyl-L-methionine</keyword>
<keyword id="KW-0808">Transferase</keyword>
<reference key="1">
    <citation type="journal article" date="1998" name="Nature">
        <title>Deciphering the biology of Mycobacterium tuberculosis from the complete genome sequence.</title>
        <authorList>
            <person name="Cole S.T."/>
            <person name="Brosch R."/>
            <person name="Parkhill J."/>
            <person name="Garnier T."/>
            <person name="Churcher C.M."/>
            <person name="Harris D.E."/>
            <person name="Gordon S.V."/>
            <person name="Eiglmeier K."/>
            <person name="Gas S."/>
            <person name="Barry C.E. III"/>
            <person name="Tekaia F."/>
            <person name="Badcock K."/>
            <person name="Basham D."/>
            <person name="Brown D."/>
            <person name="Chillingworth T."/>
            <person name="Connor R."/>
            <person name="Davies R.M."/>
            <person name="Devlin K."/>
            <person name="Feltwell T."/>
            <person name="Gentles S."/>
            <person name="Hamlin N."/>
            <person name="Holroyd S."/>
            <person name="Hornsby T."/>
            <person name="Jagels K."/>
            <person name="Krogh A."/>
            <person name="McLean J."/>
            <person name="Moule S."/>
            <person name="Murphy L.D."/>
            <person name="Oliver S."/>
            <person name="Osborne J."/>
            <person name="Quail M.A."/>
            <person name="Rajandream M.A."/>
            <person name="Rogers J."/>
            <person name="Rutter S."/>
            <person name="Seeger K."/>
            <person name="Skelton S."/>
            <person name="Squares S."/>
            <person name="Squares R."/>
            <person name="Sulston J.E."/>
            <person name="Taylor K."/>
            <person name="Whitehead S."/>
            <person name="Barrell B.G."/>
        </authorList>
    </citation>
    <scope>NUCLEOTIDE SEQUENCE [LARGE SCALE GENOMIC DNA]</scope>
    <source>
        <strain>ATCC 25618 / H37Rv</strain>
    </source>
</reference>
<reference key="2">
    <citation type="journal article" date="2011" name="Mol. Cell. Proteomics">
        <title>Proteogenomic analysis of Mycobacterium tuberculosis by high resolution mass spectrometry.</title>
        <authorList>
            <person name="Kelkar D.S."/>
            <person name="Kumar D."/>
            <person name="Kumar P."/>
            <person name="Balakrishnan L."/>
            <person name="Muthusamy B."/>
            <person name="Yadav A.K."/>
            <person name="Shrivastava P."/>
            <person name="Marimuthu A."/>
            <person name="Anand S."/>
            <person name="Sundaram H."/>
            <person name="Kingsbury R."/>
            <person name="Harsha H.C."/>
            <person name="Nair B."/>
            <person name="Prasad T.S."/>
            <person name="Chauhan D.S."/>
            <person name="Katoch K."/>
            <person name="Katoch V.M."/>
            <person name="Kumar P."/>
            <person name="Chaerkady R."/>
            <person name="Ramachandran S."/>
            <person name="Dash D."/>
            <person name="Pandey A."/>
        </authorList>
    </citation>
    <scope>IDENTIFICATION BY MASS SPECTROMETRY [LARGE SCALE ANALYSIS]</scope>
    <source>
        <strain>ATCC 25618 / H37Rv</strain>
    </source>
</reference>